<gene>
    <name evidence="1" type="primary">murD</name>
    <name type="ordered locus">HCH_05885</name>
</gene>
<name>MURD_HAHCH</name>
<comment type="function">
    <text evidence="1">Cell wall formation. Catalyzes the addition of glutamate to the nucleotide precursor UDP-N-acetylmuramoyl-L-alanine (UMA).</text>
</comment>
<comment type="catalytic activity">
    <reaction evidence="1">
        <text>UDP-N-acetyl-alpha-D-muramoyl-L-alanine + D-glutamate + ATP = UDP-N-acetyl-alpha-D-muramoyl-L-alanyl-D-glutamate + ADP + phosphate + H(+)</text>
        <dbReference type="Rhea" id="RHEA:16429"/>
        <dbReference type="ChEBI" id="CHEBI:15378"/>
        <dbReference type="ChEBI" id="CHEBI:29986"/>
        <dbReference type="ChEBI" id="CHEBI:30616"/>
        <dbReference type="ChEBI" id="CHEBI:43474"/>
        <dbReference type="ChEBI" id="CHEBI:83898"/>
        <dbReference type="ChEBI" id="CHEBI:83900"/>
        <dbReference type="ChEBI" id="CHEBI:456216"/>
        <dbReference type="EC" id="6.3.2.9"/>
    </reaction>
</comment>
<comment type="pathway">
    <text evidence="1">Cell wall biogenesis; peptidoglycan biosynthesis.</text>
</comment>
<comment type="subcellular location">
    <subcellularLocation>
        <location evidence="1">Cytoplasm</location>
    </subcellularLocation>
</comment>
<comment type="similarity">
    <text evidence="1">Belongs to the MurCDEF family.</text>
</comment>
<sequence>MSILARDRNIAVIGLGKTGLSCADYLTRRGYGFCVMDTRENPSGLAELNAINPDVPVVTGKLDQDMLARAAEIWLSPGVPLSHPDLQAVKGQVKICGDVDVFSREANAPILAITGSNGKSTVTTLVGEMAKACGVNVAVGGNLGTPVLDLLADEVELYVVELSSFQLETTDRLGALAATVLNLSEDHMDRYADMMAYHLAKLRVFYGCRRQVLNRDDALAQPPLSREAEITWFTLKTPEPGQYGVLEEKDGAWLAYGAEKLLPVEQMRIRGKHNWSNALAALALADAAGLEREPCLQALREFTGLTHRCEWVADKDGVAYINDSKATNVGATQAALAGLGPVTSGGIVLICGGQGKGQDFTPLAPAVKEWVSTLIIIGEDGPKLKEALAGGVMALSAETMEEAVKLAAEKSSPGDLVLLSPACASFDMFKNYEDRGDQFKQWVRAL</sequence>
<feature type="chain" id="PRO_0000257194" description="UDP-N-acetylmuramoylalanine--D-glutamate ligase">
    <location>
        <begin position="1"/>
        <end position="446"/>
    </location>
</feature>
<feature type="binding site" evidence="1">
    <location>
        <begin position="115"/>
        <end position="121"/>
    </location>
    <ligand>
        <name>ATP</name>
        <dbReference type="ChEBI" id="CHEBI:30616"/>
    </ligand>
</feature>
<reference key="1">
    <citation type="journal article" date="2005" name="Nucleic Acids Res.">
        <title>Genomic blueprint of Hahella chejuensis, a marine microbe producing an algicidal agent.</title>
        <authorList>
            <person name="Jeong H."/>
            <person name="Yim J.H."/>
            <person name="Lee C."/>
            <person name="Choi S.-H."/>
            <person name="Park Y.K."/>
            <person name="Yoon S.H."/>
            <person name="Hur C.-G."/>
            <person name="Kang H.-Y."/>
            <person name="Kim D."/>
            <person name="Lee H.H."/>
            <person name="Park K.H."/>
            <person name="Park S.-H."/>
            <person name="Park H.-S."/>
            <person name="Lee H.K."/>
            <person name="Oh T.K."/>
            <person name="Kim J.F."/>
        </authorList>
    </citation>
    <scope>NUCLEOTIDE SEQUENCE [LARGE SCALE GENOMIC DNA]</scope>
    <source>
        <strain>KCTC 2396</strain>
    </source>
</reference>
<evidence type="ECO:0000255" key="1">
    <source>
        <dbReference type="HAMAP-Rule" id="MF_00639"/>
    </source>
</evidence>
<protein>
    <recommendedName>
        <fullName evidence="1">UDP-N-acetylmuramoylalanine--D-glutamate ligase</fullName>
        <ecNumber evidence="1">6.3.2.9</ecNumber>
    </recommendedName>
    <alternativeName>
        <fullName evidence="1">D-glutamic acid-adding enzyme</fullName>
    </alternativeName>
    <alternativeName>
        <fullName evidence="1">UDP-N-acetylmuramoyl-L-alanyl-D-glutamate synthetase</fullName>
    </alternativeName>
</protein>
<dbReference type="EC" id="6.3.2.9" evidence="1"/>
<dbReference type="EMBL" id="CP000155">
    <property type="protein sequence ID" value="ABC32534.1"/>
    <property type="molecule type" value="Genomic_DNA"/>
</dbReference>
<dbReference type="RefSeq" id="WP_011399593.1">
    <property type="nucleotide sequence ID" value="NC_007645.1"/>
</dbReference>
<dbReference type="SMR" id="Q2S9Z0"/>
<dbReference type="STRING" id="349521.HCH_05885"/>
<dbReference type="KEGG" id="hch:HCH_05885"/>
<dbReference type="eggNOG" id="COG0771">
    <property type="taxonomic scope" value="Bacteria"/>
</dbReference>
<dbReference type="HOGENOM" id="CLU_032540_1_0_6"/>
<dbReference type="OrthoDB" id="9809796at2"/>
<dbReference type="UniPathway" id="UPA00219"/>
<dbReference type="Proteomes" id="UP000000238">
    <property type="component" value="Chromosome"/>
</dbReference>
<dbReference type="GO" id="GO:0005737">
    <property type="term" value="C:cytoplasm"/>
    <property type="evidence" value="ECO:0007669"/>
    <property type="project" value="UniProtKB-SubCell"/>
</dbReference>
<dbReference type="GO" id="GO:0005524">
    <property type="term" value="F:ATP binding"/>
    <property type="evidence" value="ECO:0007669"/>
    <property type="project" value="UniProtKB-UniRule"/>
</dbReference>
<dbReference type="GO" id="GO:0008764">
    <property type="term" value="F:UDP-N-acetylmuramoylalanine-D-glutamate ligase activity"/>
    <property type="evidence" value="ECO:0007669"/>
    <property type="project" value="UniProtKB-UniRule"/>
</dbReference>
<dbReference type="GO" id="GO:0051301">
    <property type="term" value="P:cell division"/>
    <property type="evidence" value="ECO:0007669"/>
    <property type="project" value="UniProtKB-KW"/>
</dbReference>
<dbReference type="GO" id="GO:0071555">
    <property type="term" value="P:cell wall organization"/>
    <property type="evidence" value="ECO:0007669"/>
    <property type="project" value="UniProtKB-KW"/>
</dbReference>
<dbReference type="GO" id="GO:0009252">
    <property type="term" value="P:peptidoglycan biosynthetic process"/>
    <property type="evidence" value="ECO:0007669"/>
    <property type="project" value="UniProtKB-UniRule"/>
</dbReference>
<dbReference type="GO" id="GO:0008360">
    <property type="term" value="P:regulation of cell shape"/>
    <property type="evidence" value="ECO:0007669"/>
    <property type="project" value="UniProtKB-KW"/>
</dbReference>
<dbReference type="Gene3D" id="3.90.190.20">
    <property type="entry name" value="Mur ligase, C-terminal domain"/>
    <property type="match status" value="1"/>
</dbReference>
<dbReference type="Gene3D" id="3.40.1190.10">
    <property type="entry name" value="Mur-like, catalytic domain"/>
    <property type="match status" value="1"/>
</dbReference>
<dbReference type="Gene3D" id="3.40.50.720">
    <property type="entry name" value="NAD(P)-binding Rossmann-like Domain"/>
    <property type="match status" value="1"/>
</dbReference>
<dbReference type="HAMAP" id="MF_00639">
    <property type="entry name" value="MurD"/>
    <property type="match status" value="1"/>
</dbReference>
<dbReference type="InterPro" id="IPR036565">
    <property type="entry name" value="Mur-like_cat_sf"/>
</dbReference>
<dbReference type="InterPro" id="IPR004101">
    <property type="entry name" value="Mur_ligase_C"/>
</dbReference>
<dbReference type="InterPro" id="IPR036615">
    <property type="entry name" value="Mur_ligase_C_dom_sf"/>
</dbReference>
<dbReference type="InterPro" id="IPR013221">
    <property type="entry name" value="Mur_ligase_cen"/>
</dbReference>
<dbReference type="InterPro" id="IPR005762">
    <property type="entry name" value="MurD"/>
</dbReference>
<dbReference type="NCBIfam" id="TIGR01087">
    <property type="entry name" value="murD"/>
    <property type="match status" value="1"/>
</dbReference>
<dbReference type="PANTHER" id="PTHR43692">
    <property type="entry name" value="UDP-N-ACETYLMURAMOYLALANINE--D-GLUTAMATE LIGASE"/>
    <property type="match status" value="1"/>
</dbReference>
<dbReference type="PANTHER" id="PTHR43692:SF1">
    <property type="entry name" value="UDP-N-ACETYLMURAMOYLALANINE--D-GLUTAMATE LIGASE"/>
    <property type="match status" value="1"/>
</dbReference>
<dbReference type="Pfam" id="PF02875">
    <property type="entry name" value="Mur_ligase_C"/>
    <property type="match status" value="1"/>
</dbReference>
<dbReference type="Pfam" id="PF08245">
    <property type="entry name" value="Mur_ligase_M"/>
    <property type="match status" value="1"/>
</dbReference>
<dbReference type="Pfam" id="PF21799">
    <property type="entry name" value="MurD-like_N"/>
    <property type="match status" value="1"/>
</dbReference>
<dbReference type="SUPFAM" id="SSF51984">
    <property type="entry name" value="MurCD N-terminal domain"/>
    <property type="match status" value="1"/>
</dbReference>
<dbReference type="SUPFAM" id="SSF53623">
    <property type="entry name" value="MurD-like peptide ligases, catalytic domain"/>
    <property type="match status" value="1"/>
</dbReference>
<dbReference type="SUPFAM" id="SSF53244">
    <property type="entry name" value="MurD-like peptide ligases, peptide-binding domain"/>
    <property type="match status" value="1"/>
</dbReference>
<accession>Q2S9Z0</accession>
<keyword id="KW-0067">ATP-binding</keyword>
<keyword id="KW-0131">Cell cycle</keyword>
<keyword id="KW-0132">Cell division</keyword>
<keyword id="KW-0133">Cell shape</keyword>
<keyword id="KW-0961">Cell wall biogenesis/degradation</keyword>
<keyword id="KW-0963">Cytoplasm</keyword>
<keyword id="KW-0436">Ligase</keyword>
<keyword id="KW-0547">Nucleotide-binding</keyword>
<keyword id="KW-0573">Peptidoglycan synthesis</keyword>
<keyword id="KW-1185">Reference proteome</keyword>
<organism>
    <name type="scientific">Hahella chejuensis (strain KCTC 2396)</name>
    <dbReference type="NCBI Taxonomy" id="349521"/>
    <lineage>
        <taxon>Bacteria</taxon>
        <taxon>Pseudomonadati</taxon>
        <taxon>Pseudomonadota</taxon>
        <taxon>Gammaproteobacteria</taxon>
        <taxon>Oceanospirillales</taxon>
        <taxon>Hahellaceae</taxon>
        <taxon>Hahella</taxon>
    </lineage>
</organism>
<proteinExistence type="inferred from homology"/>